<organism>
    <name type="scientific">Prochlorococcus marinus (strain MIT 9515)</name>
    <dbReference type="NCBI Taxonomy" id="167542"/>
    <lineage>
        <taxon>Bacteria</taxon>
        <taxon>Bacillati</taxon>
        <taxon>Cyanobacteriota</taxon>
        <taxon>Cyanophyceae</taxon>
        <taxon>Synechococcales</taxon>
        <taxon>Prochlorococcaceae</taxon>
        <taxon>Prochlorococcus</taxon>
    </lineage>
</organism>
<keyword id="KW-0066">ATP synthesis</keyword>
<keyword id="KW-0138">CF(0)</keyword>
<keyword id="KW-0375">Hydrogen ion transport</keyword>
<keyword id="KW-0406">Ion transport</keyword>
<keyword id="KW-0472">Membrane</keyword>
<keyword id="KW-0793">Thylakoid</keyword>
<keyword id="KW-0812">Transmembrane</keyword>
<keyword id="KW-1133">Transmembrane helix</keyword>
<keyword id="KW-0813">Transport</keyword>
<gene>
    <name evidence="1" type="primary">atpF2</name>
    <name evidence="1" type="synonym">atpG</name>
    <name type="ordered locus">P9515_16331</name>
</gene>
<protein>
    <recommendedName>
        <fullName evidence="1">ATP synthase subunit b'</fullName>
    </recommendedName>
    <alternativeName>
        <fullName evidence="1">ATP synthase F(0) sector subunit b'</fullName>
    </alternativeName>
    <alternativeName>
        <fullName evidence="1">ATPase subunit II</fullName>
    </alternativeName>
    <alternativeName>
        <fullName evidence="1">F-type ATPase subunit b'</fullName>
        <shortName evidence="1">F-ATPase subunit b'</shortName>
    </alternativeName>
</protein>
<accession>A2BYH9</accession>
<sequence length="153" mass="17141">MLAFNFFGATEGGLFDINATLPLMAIQVVALTYILNSLFFKPVGKVVEKREKFVSNNIMEAKNKLSEVEKLEADLLSQLQSARSEAQKIVSDAENESDKLYKEALELANNEANASKEKARLEIENQTSSARDQLFKQADDLSELIVNRLILEK</sequence>
<dbReference type="EMBL" id="CP000552">
    <property type="protein sequence ID" value="ABM72840.1"/>
    <property type="molecule type" value="Genomic_DNA"/>
</dbReference>
<dbReference type="RefSeq" id="WP_011820935.1">
    <property type="nucleotide sequence ID" value="NC_008817.1"/>
</dbReference>
<dbReference type="SMR" id="A2BYH9"/>
<dbReference type="STRING" id="167542.P9515_16331"/>
<dbReference type="GeneID" id="60201952"/>
<dbReference type="KEGG" id="pmc:P9515_16331"/>
<dbReference type="eggNOG" id="COG0711">
    <property type="taxonomic scope" value="Bacteria"/>
</dbReference>
<dbReference type="HOGENOM" id="CLU_079215_9_0_3"/>
<dbReference type="OrthoDB" id="426571at2"/>
<dbReference type="Proteomes" id="UP000001589">
    <property type="component" value="Chromosome"/>
</dbReference>
<dbReference type="GO" id="GO:0031676">
    <property type="term" value="C:plasma membrane-derived thylakoid membrane"/>
    <property type="evidence" value="ECO:0007669"/>
    <property type="project" value="UniProtKB-SubCell"/>
</dbReference>
<dbReference type="GO" id="GO:0045259">
    <property type="term" value="C:proton-transporting ATP synthase complex"/>
    <property type="evidence" value="ECO:0007669"/>
    <property type="project" value="UniProtKB-KW"/>
</dbReference>
<dbReference type="GO" id="GO:0046933">
    <property type="term" value="F:proton-transporting ATP synthase activity, rotational mechanism"/>
    <property type="evidence" value="ECO:0007669"/>
    <property type="project" value="UniProtKB-UniRule"/>
</dbReference>
<dbReference type="GO" id="GO:0046961">
    <property type="term" value="F:proton-transporting ATPase activity, rotational mechanism"/>
    <property type="evidence" value="ECO:0007669"/>
    <property type="project" value="TreeGrafter"/>
</dbReference>
<dbReference type="CDD" id="cd06503">
    <property type="entry name" value="ATP-synt_Fo_b"/>
    <property type="match status" value="1"/>
</dbReference>
<dbReference type="Gene3D" id="1.20.5.620">
    <property type="entry name" value="F1F0 ATP synthase subunit B, membrane domain"/>
    <property type="match status" value="1"/>
</dbReference>
<dbReference type="HAMAP" id="MF_01398">
    <property type="entry name" value="ATP_synth_b_bprime"/>
    <property type="match status" value="1"/>
</dbReference>
<dbReference type="HAMAP" id="MF_01399">
    <property type="entry name" value="ATP_synth_bprime"/>
    <property type="match status" value="1"/>
</dbReference>
<dbReference type="InterPro" id="IPR034679">
    <property type="entry name" value="ATP_synth_b"/>
</dbReference>
<dbReference type="InterPro" id="IPR028987">
    <property type="entry name" value="ATP_synth_B-like_membr_sf"/>
</dbReference>
<dbReference type="InterPro" id="IPR002146">
    <property type="entry name" value="ATP_synth_b/b'su_bac/chlpt"/>
</dbReference>
<dbReference type="InterPro" id="IPR050059">
    <property type="entry name" value="ATP_synthase_B_chain"/>
</dbReference>
<dbReference type="NCBIfam" id="NF005607">
    <property type="entry name" value="PRK07353.1"/>
    <property type="match status" value="1"/>
</dbReference>
<dbReference type="PANTHER" id="PTHR33445">
    <property type="entry name" value="ATP SYNTHASE SUBUNIT B', CHLOROPLASTIC"/>
    <property type="match status" value="1"/>
</dbReference>
<dbReference type="PANTHER" id="PTHR33445:SF2">
    <property type="entry name" value="ATP SYNTHASE SUBUNIT B', CHLOROPLASTIC"/>
    <property type="match status" value="1"/>
</dbReference>
<dbReference type="Pfam" id="PF00430">
    <property type="entry name" value="ATP-synt_B"/>
    <property type="match status" value="1"/>
</dbReference>
<dbReference type="SUPFAM" id="SSF81573">
    <property type="entry name" value="F1F0 ATP synthase subunit B, membrane domain"/>
    <property type="match status" value="1"/>
</dbReference>
<comment type="function">
    <text evidence="1">F(1)F(0) ATP synthase produces ATP from ADP in the presence of a proton or sodium gradient. F-type ATPases consist of two structural domains, F(1) containing the extramembraneous catalytic core and F(0) containing the membrane proton channel, linked together by a central stalk and a peripheral stalk. During catalysis, ATP synthesis in the catalytic domain of F(1) is coupled via a rotary mechanism of the central stalk subunits to proton translocation.</text>
</comment>
<comment type="function">
    <text evidence="1">Component of the F(0) channel, it forms part of the peripheral stalk, linking F(1) to F(0). The b'-subunit is a diverged and duplicated form of b found in plants and photosynthetic bacteria.</text>
</comment>
<comment type="subunit">
    <text evidence="1">F-type ATPases have 2 components, F(1) - the catalytic core - and F(0) - the membrane proton channel. F(1) has five subunits: alpha(3), beta(3), gamma(1), delta(1), epsilon(1). F(0) has four main subunits: a(1), b(1), b'(1) and c(10-14). The alpha and beta chains form an alternating ring which encloses part of the gamma chain. F(1) is attached to F(0) by a central stalk formed by the gamma and epsilon chains, while a peripheral stalk is formed by the delta, b and b' chains.</text>
</comment>
<comment type="subcellular location">
    <subcellularLocation>
        <location evidence="1">Cellular thylakoid membrane</location>
        <topology evidence="1">Single-pass membrane protein</topology>
    </subcellularLocation>
</comment>
<comment type="similarity">
    <text evidence="1">Belongs to the ATPase B chain family.</text>
</comment>
<feature type="chain" id="PRO_0000369027" description="ATP synthase subunit b'">
    <location>
        <begin position="1"/>
        <end position="153"/>
    </location>
</feature>
<feature type="transmembrane region" description="Helical" evidence="1">
    <location>
        <begin position="23"/>
        <end position="40"/>
    </location>
</feature>
<evidence type="ECO:0000255" key="1">
    <source>
        <dbReference type="HAMAP-Rule" id="MF_01399"/>
    </source>
</evidence>
<proteinExistence type="inferred from homology"/>
<reference key="1">
    <citation type="journal article" date="2007" name="PLoS Genet.">
        <title>Patterns and implications of gene gain and loss in the evolution of Prochlorococcus.</title>
        <authorList>
            <person name="Kettler G.C."/>
            <person name="Martiny A.C."/>
            <person name="Huang K."/>
            <person name="Zucker J."/>
            <person name="Coleman M.L."/>
            <person name="Rodrigue S."/>
            <person name="Chen F."/>
            <person name="Lapidus A."/>
            <person name="Ferriera S."/>
            <person name="Johnson J."/>
            <person name="Steglich C."/>
            <person name="Church G.M."/>
            <person name="Richardson P."/>
            <person name="Chisholm S.W."/>
        </authorList>
    </citation>
    <scope>NUCLEOTIDE SEQUENCE [LARGE SCALE GENOMIC DNA]</scope>
    <source>
        <strain>MIT 9515</strain>
    </source>
</reference>
<name>ATPF2_PROM5</name>